<proteinExistence type="inferred from homology"/>
<protein>
    <recommendedName>
        <fullName evidence="1">Large ribosomal subunit protein bL21</fullName>
    </recommendedName>
    <alternativeName>
        <fullName evidence="2">50S ribosomal protein L21</fullName>
    </alternativeName>
</protein>
<reference key="1">
    <citation type="journal article" date="2012" name="Environ. Microbiol.">
        <title>The genome sequence of Desulfatibacillum alkenivorans AK-01: a blueprint for anaerobic alkane oxidation.</title>
        <authorList>
            <person name="Callaghan A.V."/>
            <person name="Morris B.E."/>
            <person name="Pereira I.A."/>
            <person name="McInerney M.J."/>
            <person name="Austin R.N."/>
            <person name="Groves J.T."/>
            <person name="Kukor J.J."/>
            <person name="Suflita J.M."/>
            <person name="Young L.Y."/>
            <person name="Zylstra G.J."/>
            <person name="Wawrik B."/>
        </authorList>
    </citation>
    <scope>NUCLEOTIDE SEQUENCE [LARGE SCALE GENOMIC DNA]</scope>
    <source>
        <strain>AK-01</strain>
    </source>
</reference>
<sequence>MYAVIATGGKQYKVGEGEIVRVEKLPGEVGDTVRLDQVLLFSDGENVKVGQPTVENVAVDAQIVEQGKAKKVLVFRFKRRKGYRKKQGHRQPFTALKINKIEAGA</sequence>
<dbReference type="EMBL" id="CP001322">
    <property type="protein sequence ID" value="ACL05799.1"/>
    <property type="molecule type" value="Genomic_DNA"/>
</dbReference>
<dbReference type="RefSeq" id="WP_015948847.1">
    <property type="nucleotide sequence ID" value="NC_011768.1"/>
</dbReference>
<dbReference type="SMR" id="B8FM66"/>
<dbReference type="KEGG" id="dal:Dalk_4114"/>
<dbReference type="eggNOG" id="COG0261">
    <property type="taxonomic scope" value="Bacteria"/>
</dbReference>
<dbReference type="HOGENOM" id="CLU_061463_3_2_7"/>
<dbReference type="Proteomes" id="UP000000739">
    <property type="component" value="Chromosome"/>
</dbReference>
<dbReference type="GO" id="GO:0005737">
    <property type="term" value="C:cytoplasm"/>
    <property type="evidence" value="ECO:0007669"/>
    <property type="project" value="UniProtKB-ARBA"/>
</dbReference>
<dbReference type="GO" id="GO:1990904">
    <property type="term" value="C:ribonucleoprotein complex"/>
    <property type="evidence" value="ECO:0007669"/>
    <property type="project" value="UniProtKB-KW"/>
</dbReference>
<dbReference type="GO" id="GO:0005840">
    <property type="term" value="C:ribosome"/>
    <property type="evidence" value="ECO:0007669"/>
    <property type="project" value="UniProtKB-KW"/>
</dbReference>
<dbReference type="GO" id="GO:0019843">
    <property type="term" value="F:rRNA binding"/>
    <property type="evidence" value="ECO:0007669"/>
    <property type="project" value="UniProtKB-UniRule"/>
</dbReference>
<dbReference type="GO" id="GO:0003735">
    <property type="term" value="F:structural constituent of ribosome"/>
    <property type="evidence" value="ECO:0007669"/>
    <property type="project" value="InterPro"/>
</dbReference>
<dbReference type="GO" id="GO:0006412">
    <property type="term" value="P:translation"/>
    <property type="evidence" value="ECO:0007669"/>
    <property type="project" value="UniProtKB-UniRule"/>
</dbReference>
<dbReference type="HAMAP" id="MF_01363">
    <property type="entry name" value="Ribosomal_bL21"/>
    <property type="match status" value="1"/>
</dbReference>
<dbReference type="InterPro" id="IPR028909">
    <property type="entry name" value="bL21-like"/>
</dbReference>
<dbReference type="InterPro" id="IPR036164">
    <property type="entry name" value="bL21-like_sf"/>
</dbReference>
<dbReference type="InterPro" id="IPR001787">
    <property type="entry name" value="Ribosomal_bL21"/>
</dbReference>
<dbReference type="InterPro" id="IPR018258">
    <property type="entry name" value="Ribosomal_bL21_CS"/>
</dbReference>
<dbReference type="NCBIfam" id="TIGR00061">
    <property type="entry name" value="L21"/>
    <property type="match status" value="1"/>
</dbReference>
<dbReference type="PANTHER" id="PTHR21349">
    <property type="entry name" value="50S RIBOSOMAL PROTEIN L21"/>
    <property type="match status" value="1"/>
</dbReference>
<dbReference type="PANTHER" id="PTHR21349:SF0">
    <property type="entry name" value="LARGE RIBOSOMAL SUBUNIT PROTEIN BL21M"/>
    <property type="match status" value="1"/>
</dbReference>
<dbReference type="Pfam" id="PF00829">
    <property type="entry name" value="Ribosomal_L21p"/>
    <property type="match status" value="1"/>
</dbReference>
<dbReference type="SUPFAM" id="SSF141091">
    <property type="entry name" value="L21p-like"/>
    <property type="match status" value="1"/>
</dbReference>
<dbReference type="PROSITE" id="PS01169">
    <property type="entry name" value="RIBOSOMAL_L21"/>
    <property type="match status" value="1"/>
</dbReference>
<accession>B8FM66</accession>
<name>RL21_DESAL</name>
<organism>
    <name type="scientific">Desulfatibacillum aliphaticivorans</name>
    <dbReference type="NCBI Taxonomy" id="218208"/>
    <lineage>
        <taxon>Bacteria</taxon>
        <taxon>Pseudomonadati</taxon>
        <taxon>Thermodesulfobacteriota</taxon>
        <taxon>Desulfobacteria</taxon>
        <taxon>Desulfobacterales</taxon>
        <taxon>Desulfatibacillaceae</taxon>
        <taxon>Desulfatibacillum</taxon>
    </lineage>
</organism>
<evidence type="ECO:0000255" key="1">
    <source>
        <dbReference type="HAMAP-Rule" id="MF_01363"/>
    </source>
</evidence>
<evidence type="ECO:0000305" key="2"/>
<feature type="chain" id="PRO_1000143782" description="Large ribosomal subunit protein bL21">
    <location>
        <begin position="1"/>
        <end position="105"/>
    </location>
</feature>
<gene>
    <name evidence="1" type="primary">rplU</name>
    <name type="ordered locus">Dalk_4114</name>
</gene>
<comment type="function">
    <text evidence="1">This protein binds to 23S rRNA in the presence of protein L20.</text>
</comment>
<comment type="subunit">
    <text evidence="1">Part of the 50S ribosomal subunit. Contacts protein L20.</text>
</comment>
<comment type="similarity">
    <text evidence="1">Belongs to the bacterial ribosomal protein bL21 family.</text>
</comment>
<keyword id="KW-1185">Reference proteome</keyword>
<keyword id="KW-0687">Ribonucleoprotein</keyword>
<keyword id="KW-0689">Ribosomal protein</keyword>
<keyword id="KW-0694">RNA-binding</keyword>
<keyword id="KW-0699">rRNA-binding</keyword>